<proteinExistence type="inferred from homology"/>
<feature type="chain" id="PRO_0000324044" description="Light-independent protochlorophyllide reductase subunit B">
    <location>
        <begin position="1"/>
        <end position="568"/>
    </location>
</feature>
<feature type="region of interest" description="Disordered" evidence="2">
    <location>
        <begin position="476"/>
        <end position="517"/>
    </location>
</feature>
<feature type="compositionally biased region" description="Polar residues" evidence="2">
    <location>
        <begin position="498"/>
        <end position="515"/>
    </location>
</feature>
<feature type="active site" description="Proton donor" evidence="1">
    <location>
        <position position="293"/>
    </location>
</feature>
<feature type="binding site" evidence="1">
    <location>
        <position position="36"/>
    </location>
    <ligand>
        <name>[4Fe-4S] cluster</name>
        <dbReference type="ChEBI" id="CHEBI:49883"/>
        <note>ligand shared with heterodimeric partner</note>
    </ligand>
</feature>
<feature type="binding site" evidence="1">
    <location>
        <begin position="437"/>
        <end position="438"/>
    </location>
    <ligand>
        <name>substrate</name>
    </ligand>
</feature>
<reference key="1">
    <citation type="submission" date="2007-04" db="EMBL/GenBank/DDBJ databases">
        <title>Complete sequence of Roseiflexus sp. RS-1.</title>
        <authorList>
            <consortium name="US DOE Joint Genome Institute"/>
            <person name="Copeland A."/>
            <person name="Lucas S."/>
            <person name="Lapidus A."/>
            <person name="Barry K."/>
            <person name="Detter J.C."/>
            <person name="Glavina del Rio T."/>
            <person name="Hammon N."/>
            <person name="Israni S."/>
            <person name="Dalin E."/>
            <person name="Tice H."/>
            <person name="Pitluck S."/>
            <person name="Chertkov O."/>
            <person name="Brettin T."/>
            <person name="Bruce D."/>
            <person name="Han C."/>
            <person name="Schmutz J."/>
            <person name="Larimer F."/>
            <person name="Land M."/>
            <person name="Hauser L."/>
            <person name="Kyrpides N."/>
            <person name="Mikhailova N."/>
            <person name="Bryant D.A."/>
            <person name="Richardson P."/>
        </authorList>
    </citation>
    <scope>NUCLEOTIDE SEQUENCE [LARGE SCALE GENOMIC DNA]</scope>
    <source>
        <strain>RS-1</strain>
    </source>
</reference>
<comment type="function">
    <text evidence="1">Component of the dark-operative protochlorophyllide reductase (DPOR) that uses Mg-ATP and reduced ferredoxin to reduce ring D of protochlorophyllide (Pchlide) to form chlorophyllide a (Chlide). This reaction is light-independent. The NB-protein (BchN-BchB) is the catalytic component of the complex.</text>
</comment>
<comment type="catalytic activity">
    <reaction evidence="1">
        <text>chlorophyllide a + oxidized 2[4Fe-4S]-[ferredoxin] + 2 ADP + 2 phosphate = protochlorophyllide a + reduced 2[4Fe-4S]-[ferredoxin] + 2 ATP + 2 H2O</text>
        <dbReference type="Rhea" id="RHEA:28202"/>
        <dbReference type="Rhea" id="RHEA-COMP:10002"/>
        <dbReference type="Rhea" id="RHEA-COMP:10004"/>
        <dbReference type="ChEBI" id="CHEBI:15377"/>
        <dbReference type="ChEBI" id="CHEBI:30616"/>
        <dbReference type="ChEBI" id="CHEBI:33722"/>
        <dbReference type="ChEBI" id="CHEBI:33723"/>
        <dbReference type="ChEBI" id="CHEBI:43474"/>
        <dbReference type="ChEBI" id="CHEBI:83348"/>
        <dbReference type="ChEBI" id="CHEBI:83350"/>
        <dbReference type="ChEBI" id="CHEBI:456216"/>
        <dbReference type="EC" id="1.3.7.7"/>
    </reaction>
</comment>
<comment type="cofactor">
    <cofactor evidence="1">
        <name>[4Fe-4S] cluster</name>
        <dbReference type="ChEBI" id="CHEBI:49883"/>
    </cofactor>
    <text evidence="1">Binds 1 [4Fe-4S] cluster per heterodimer. The cluster is bound at the heterodimer interface by residues from both subunits.</text>
</comment>
<comment type="pathway">
    <text evidence="1">Porphyrin-containing compound metabolism; bacteriochlorophyll biosynthesis (light-independent).</text>
</comment>
<comment type="subunit">
    <text evidence="1">Protochlorophyllide reductase is composed of three subunits; BchL, BchN and BchB. Forms a heterotetramer of two BchB and two BchN subunits.</text>
</comment>
<comment type="similarity">
    <text evidence="1">Belongs to the ChlB/BchB/BchZ family.</text>
</comment>
<dbReference type="EC" id="1.3.7.7" evidence="1"/>
<dbReference type="EMBL" id="CP000686">
    <property type="protein sequence ID" value="ABQ90298.1"/>
    <property type="molecule type" value="Genomic_DNA"/>
</dbReference>
<dbReference type="RefSeq" id="WP_011956644.1">
    <property type="nucleotide sequence ID" value="NC_009523.1"/>
</dbReference>
<dbReference type="SMR" id="A5UUJ5"/>
<dbReference type="STRING" id="357808.RoseRS_1909"/>
<dbReference type="KEGG" id="rrs:RoseRS_1909"/>
<dbReference type="eggNOG" id="COG2710">
    <property type="taxonomic scope" value="Bacteria"/>
</dbReference>
<dbReference type="HOGENOM" id="CLU_025470_0_0_0"/>
<dbReference type="OrthoDB" id="495776at2"/>
<dbReference type="UniPathway" id="UPA00671"/>
<dbReference type="Proteomes" id="UP000006554">
    <property type="component" value="Chromosome"/>
</dbReference>
<dbReference type="GO" id="GO:0051539">
    <property type="term" value="F:4 iron, 4 sulfur cluster binding"/>
    <property type="evidence" value="ECO:0007669"/>
    <property type="project" value="UniProtKB-UniRule"/>
</dbReference>
<dbReference type="GO" id="GO:0005524">
    <property type="term" value="F:ATP binding"/>
    <property type="evidence" value="ECO:0007669"/>
    <property type="project" value="UniProtKB-UniRule"/>
</dbReference>
<dbReference type="GO" id="GO:0046872">
    <property type="term" value="F:metal ion binding"/>
    <property type="evidence" value="ECO:0007669"/>
    <property type="project" value="UniProtKB-KW"/>
</dbReference>
<dbReference type="GO" id="GO:0016730">
    <property type="term" value="F:oxidoreductase activity, acting on iron-sulfur proteins as donors"/>
    <property type="evidence" value="ECO:0007669"/>
    <property type="project" value="InterPro"/>
</dbReference>
<dbReference type="GO" id="GO:0016636">
    <property type="term" value="F:oxidoreductase activity, acting on the CH-CH group of donors, iron-sulfur protein as acceptor"/>
    <property type="evidence" value="ECO:0007669"/>
    <property type="project" value="UniProtKB-UniRule"/>
</dbReference>
<dbReference type="GO" id="GO:0036070">
    <property type="term" value="P:light-independent bacteriochlorophyll biosynthetic process"/>
    <property type="evidence" value="ECO:0007669"/>
    <property type="project" value="UniProtKB-UniRule"/>
</dbReference>
<dbReference type="GO" id="GO:0019685">
    <property type="term" value="P:photosynthesis, dark reaction"/>
    <property type="evidence" value="ECO:0007669"/>
    <property type="project" value="InterPro"/>
</dbReference>
<dbReference type="Gene3D" id="1.20.89.20">
    <property type="match status" value="1"/>
</dbReference>
<dbReference type="Gene3D" id="3.40.50.1980">
    <property type="entry name" value="Nitrogenase molybdenum iron protein domain"/>
    <property type="match status" value="3"/>
</dbReference>
<dbReference type="Gene3D" id="1.10.8.550">
    <property type="entry name" value="Proto-chlorophyllide reductase 57 kD subunit B"/>
    <property type="match status" value="1"/>
</dbReference>
<dbReference type="HAMAP" id="MF_00353">
    <property type="entry name" value="ChlB_BchB"/>
    <property type="match status" value="1"/>
</dbReference>
<dbReference type="InterPro" id="IPR050152">
    <property type="entry name" value="ChlB/BchB/BchZ"/>
</dbReference>
<dbReference type="InterPro" id="IPR013580">
    <property type="entry name" value="LI-POR_suB-like_C"/>
</dbReference>
<dbReference type="InterPro" id="IPR000510">
    <property type="entry name" value="Nase/OxRdtase_comp1"/>
</dbReference>
<dbReference type="InterPro" id="IPR042298">
    <property type="entry name" value="P-CP_red_C"/>
</dbReference>
<dbReference type="InterPro" id="IPR005969">
    <property type="entry name" value="Protochl_reductB"/>
</dbReference>
<dbReference type="InterPro" id="IPR016209">
    <property type="entry name" value="Protochlorophyllide_Rdtase"/>
</dbReference>
<dbReference type="NCBIfam" id="TIGR01278">
    <property type="entry name" value="DPOR_BchB"/>
    <property type="match status" value="1"/>
</dbReference>
<dbReference type="NCBIfam" id="NF002789">
    <property type="entry name" value="PRK02910.1-3"/>
    <property type="match status" value="1"/>
</dbReference>
<dbReference type="PANTHER" id="PTHR33712">
    <property type="entry name" value="LIGHT-INDEPENDENT PROTOCHLOROPHYLLIDE REDUCTASE SUBUNIT B"/>
    <property type="match status" value="1"/>
</dbReference>
<dbReference type="PANTHER" id="PTHR33712:SF7">
    <property type="entry name" value="LIGHT-INDEPENDENT PROTOCHLOROPHYLLIDE REDUCTASE SUBUNIT B"/>
    <property type="match status" value="1"/>
</dbReference>
<dbReference type="Pfam" id="PF00148">
    <property type="entry name" value="Oxidored_nitro"/>
    <property type="match status" value="1"/>
</dbReference>
<dbReference type="Pfam" id="PF08369">
    <property type="entry name" value="PCP_red"/>
    <property type="match status" value="1"/>
</dbReference>
<dbReference type="PIRSF" id="PIRSF000163">
    <property type="entry name" value="PCP_ChlB"/>
    <property type="match status" value="1"/>
</dbReference>
<dbReference type="SUPFAM" id="SSF53807">
    <property type="entry name" value="Helical backbone' metal receptor"/>
    <property type="match status" value="1"/>
</dbReference>
<evidence type="ECO:0000255" key="1">
    <source>
        <dbReference type="HAMAP-Rule" id="MF_00353"/>
    </source>
</evidence>
<evidence type="ECO:0000256" key="2">
    <source>
        <dbReference type="SAM" id="MobiDB-lite"/>
    </source>
</evidence>
<organism>
    <name type="scientific">Roseiflexus sp. (strain RS-1)</name>
    <dbReference type="NCBI Taxonomy" id="357808"/>
    <lineage>
        <taxon>Bacteria</taxon>
        <taxon>Bacillati</taxon>
        <taxon>Chloroflexota</taxon>
        <taxon>Chloroflexia</taxon>
        <taxon>Chloroflexales</taxon>
        <taxon>Roseiflexineae</taxon>
        <taxon>Roseiflexaceae</taxon>
        <taxon>Roseiflexus</taxon>
    </lineage>
</organism>
<gene>
    <name evidence="1" type="primary">bchB</name>
    <name type="ordered locus">RoseRS_1909</name>
</gene>
<sequence>MRLALWMYQGTAHHGVGRIANSMRGVHAVFHAPQGDDYVNPIFTMLERTPDFPRMTTSIVSGRDLAQGTVRLPETLRAVDAQVHPDLIIVCASCSTILLQEDLERMARSAGTSAEVLVYDANPYRMQEVRSADGLLTTLVQRFARPQAPLPTPSVNILGPASLGFHNRSDLICLRRMLATLGVQINVVAPLGASIHDLERLPAAWATIAPYRELGQNAARWLEDQFGIPALTDAPIGVQPTLRWLRRLVETLNEAGARLQRLSTPLRLPPLTAFSLDGMSAPSSVPWFARTADMESYSMKRAFVFGDATHTVGMVKFLRDELGMQIAGAGTYLEEEAEWVYQELKEYLPPDDSGSPKSSFLATDVFQHVARRIADLSPELVCGTQMERHACRKLDIPCLVIAPPTHIENHLLSYRPVLGFDGADVLADAVYTTATLGMEKHLIDMFGDAGLDYDEPQTGEPRTENQELRVENRASANGHPEAGVSVGAAEPSAAPSRSVVTEESNRATTPSSSTVHPVWTPDAQAMLKKIPFFVRGRVQKNVERYAMQHGYATITAEVLVEAREALGG</sequence>
<protein>
    <recommendedName>
        <fullName evidence="1">Light-independent protochlorophyllide reductase subunit B</fullName>
        <shortName evidence="1">DPOR subunit B</shortName>
        <shortName evidence="1">LI-POR subunit B</shortName>
        <ecNumber evidence="1">1.3.7.7</ecNumber>
    </recommendedName>
</protein>
<accession>A5UUJ5</accession>
<keyword id="KW-0004">4Fe-4S</keyword>
<keyword id="KW-0067">ATP-binding</keyword>
<keyword id="KW-0077">Bacteriochlorophyll biosynthesis</keyword>
<keyword id="KW-0149">Chlorophyll biosynthesis</keyword>
<keyword id="KW-0408">Iron</keyword>
<keyword id="KW-0411">Iron-sulfur</keyword>
<keyword id="KW-0479">Metal-binding</keyword>
<keyword id="KW-0547">Nucleotide-binding</keyword>
<keyword id="KW-0560">Oxidoreductase</keyword>
<keyword id="KW-0602">Photosynthesis</keyword>
<name>BCHB_ROSS1</name>